<keyword id="KW-0004">4Fe-4S</keyword>
<keyword id="KW-0997">Cell inner membrane</keyword>
<keyword id="KW-1003">Cell membrane</keyword>
<keyword id="KW-0408">Iron</keyword>
<keyword id="KW-0411">Iron-sulfur</keyword>
<keyword id="KW-0472">Membrane</keyword>
<keyword id="KW-0479">Metal-binding</keyword>
<keyword id="KW-0520">NAD</keyword>
<keyword id="KW-0874">Quinone</keyword>
<keyword id="KW-1278">Translocase</keyword>
<keyword id="KW-0813">Transport</keyword>
<feature type="chain" id="PRO_0000376140" description="NADH-quinone oxidoreductase subunit B">
    <location>
        <begin position="1"/>
        <end position="196"/>
    </location>
</feature>
<feature type="binding site" evidence="1">
    <location>
        <position position="63"/>
    </location>
    <ligand>
        <name>[4Fe-4S] cluster</name>
        <dbReference type="ChEBI" id="CHEBI:49883"/>
    </ligand>
</feature>
<feature type="binding site" evidence="1">
    <location>
        <position position="64"/>
    </location>
    <ligand>
        <name>[4Fe-4S] cluster</name>
        <dbReference type="ChEBI" id="CHEBI:49883"/>
    </ligand>
</feature>
<feature type="binding site" evidence="1">
    <location>
        <position position="129"/>
    </location>
    <ligand>
        <name>[4Fe-4S] cluster</name>
        <dbReference type="ChEBI" id="CHEBI:49883"/>
    </ligand>
</feature>
<feature type="binding site" evidence="1">
    <location>
        <position position="159"/>
    </location>
    <ligand>
        <name>[4Fe-4S] cluster</name>
        <dbReference type="ChEBI" id="CHEBI:49883"/>
    </ligand>
</feature>
<evidence type="ECO:0000255" key="1">
    <source>
        <dbReference type="HAMAP-Rule" id="MF_01356"/>
    </source>
</evidence>
<proteinExistence type="inferred from homology"/>
<reference key="1">
    <citation type="journal article" date="2004" name="Proc. Natl. Acad. Sci. U.S.A.">
        <title>Genomic analysis of Bacteroides fragilis reveals extensive DNA inversions regulating cell surface adaptation.</title>
        <authorList>
            <person name="Kuwahara T."/>
            <person name="Yamashita A."/>
            <person name="Hirakawa H."/>
            <person name="Nakayama H."/>
            <person name="Toh H."/>
            <person name="Okada N."/>
            <person name="Kuhara S."/>
            <person name="Hattori M."/>
            <person name="Hayashi T."/>
            <person name="Ohnishi Y."/>
        </authorList>
    </citation>
    <scope>NUCLEOTIDE SEQUENCE [LARGE SCALE GENOMIC DNA]</scope>
    <source>
        <strain>YCH46</strain>
    </source>
</reference>
<name>NUOB_BACFR</name>
<accession>Q64Y07</accession>
<comment type="function">
    <text evidence="1">NDH-1 shuttles electrons from NADH, via FMN and iron-sulfur (Fe-S) centers, to quinones in the respiratory chain. The immediate electron acceptor for the enzyme in this species is believed to be a menaquinone. Couples the redox reaction to proton translocation (for every two electrons transferred, four hydrogen ions are translocated across the cytoplasmic membrane), and thus conserves the redox energy in a proton gradient.</text>
</comment>
<comment type="catalytic activity">
    <reaction evidence="1">
        <text>a quinone + NADH + 5 H(+)(in) = a quinol + NAD(+) + 4 H(+)(out)</text>
        <dbReference type="Rhea" id="RHEA:57888"/>
        <dbReference type="ChEBI" id="CHEBI:15378"/>
        <dbReference type="ChEBI" id="CHEBI:24646"/>
        <dbReference type="ChEBI" id="CHEBI:57540"/>
        <dbReference type="ChEBI" id="CHEBI:57945"/>
        <dbReference type="ChEBI" id="CHEBI:132124"/>
    </reaction>
</comment>
<comment type="cofactor">
    <cofactor evidence="1">
        <name>[4Fe-4S] cluster</name>
        <dbReference type="ChEBI" id="CHEBI:49883"/>
    </cofactor>
    <text evidence="1">Binds 1 [4Fe-4S] cluster.</text>
</comment>
<comment type="subunit">
    <text evidence="1">NDH-1 is composed of 14 different subunits. Subunits NuoB, C, D, E, F, and G constitute the peripheral sector of the complex.</text>
</comment>
<comment type="subcellular location">
    <subcellularLocation>
        <location evidence="1">Cell inner membrane</location>
        <topology evidence="1">Peripheral membrane protein</topology>
        <orientation evidence="1">Cytoplasmic side</orientation>
    </subcellularLocation>
</comment>
<comment type="similarity">
    <text evidence="1">Belongs to the complex I 20 kDa subunit family.</text>
</comment>
<gene>
    <name evidence="1" type="primary">nuoB</name>
    <name type="ordered locus">BF0868</name>
</gene>
<organism>
    <name type="scientific">Bacteroides fragilis (strain YCH46)</name>
    <dbReference type="NCBI Taxonomy" id="295405"/>
    <lineage>
        <taxon>Bacteria</taxon>
        <taxon>Pseudomonadati</taxon>
        <taxon>Bacteroidota</taxon>
        <taxon>Bacteroidia</taxon>
        <taxon>Bacteroidales</taxon>
        <taxon>Bacteroidaceae</taxon>
        <taxon>Bacteroides</taxon>
    </lineage>
</organism>
<sequence>MEIMKKPKIKSIPYEDFIDNESLEKMVKELNEGGANVFVGVLDDLINWGRSNSLWPLTFATSCCGIEFMALGAARYDMARFGFEVARASPRQADMIMVCGTITNKMAPVLKRLYDQMADPKYVIAVGGCAVSGGPFRKSYHVVNGVDKILPVDVYIPGCPPRPEAFYYGMMQLQRKVKIEKFFGGVNRKEKKPEGK</sequence>
<protein>
    <recommendedName>
        <fullName evidence="1">NADH-quinone oxidoreductase subunit B</fullName>
        <ecNumber evidence="1">7.1.1.-</ecNumber>
    </recommendedName>
    <alternativeName>
        <fullName evidence="1">NADH dehydrogenase I subunit B</fullName>
    </alternativeName>
    <alternativeName>
        <fullName evidence="1">NDH-1 subunit B</fullName>
    </alternativeName>
</protein>
<dbReference type="EC" id="7.1.1.-" evidence="1"/>
<dbReference type="EMBL" id="AP006841">
    <property type="protein sequence ID" value="BAD47619.1"/>
    <property type="molecule type" value="Genomic_DNA"/>
</dbReference>
<dbReference type="RefSeq" id="WP_008769486.1">
    <property type="nucleotide sequence ID" value="NZ_UYXF01000001.1"/>
</dbReference>
<dbReference type="RefSeq" id="YP_098153.1">
    <property type="nucleotide sequence ID" value="NC_006347.1"/>
</dbReference>
<dbReference type="SMR" id="Q64Y07"/>
<dbReference type="STRING" id="295405.BF0868"/>
<dbReference type="KEGG" id="bfr:BF0868"/>
<dbReference type="PATRIC" id="fig|295405.11.peg.874"/>
<dbReference type="HOGENOM" id="CLU_055737_7_2_10"/>
<dbReference type="OrthoDB" id="9786737at2"/>
<dbReference type="Proteomes" id="UP000002197">
    <property type="component" value="Chromosome"/>
</dbReference>
<dbReference type="GO" id="GO:0005886">
    <property type="term" value="C:plasma membrane"/>
    <property type="evidence" value="ECO:0007669"/>
    <property type="project" value="UniProtKB-SubCell"/>
</dbReference>
<dbReference type="GO" id="GO:0045271">
    <property type="term" value="C:respiratory chain complex I"/>
    <property type="evidence" value="ECO:0007669"/>
    <property type="project" value="TreeGrafter"/>
</dbReference>
<dbReference type="GO" id="GO:0051539">
    <property type="term" value="F:4 iron, 4 sulfur cluster binding"/>
    <property type="evidence" value="ECO:0007669"/>
    <property type="project" value="UniProtKB-KW"/>
</dbReference>
<dbReference type="GO" id="GO:0005506">
    <property type="term" value="F:iron ion binding"/>
    <property type="evidence" value="ECO:0007669"/>
    <property type="project" value="UniProtKB-UniRule"/>
</dbReference>
<dbReference type="GO" id="GO:0008137">
    <property type="term" value="F:NADH dehydrogenase (ubiquinone) activity"/>
    <property type="evidence" value="ECO:0007669"/>
    <property type="project" value="InterPro"/>
</dbReference>
<dbReference type="GO" id="GO:0050136">
    <property type="term" value="F:NADH:ubiquinone reductase (non-electrogenic) activity"/>
    <property type="evidence" value="ECO:0007669"/>
    <property type="project" value="UniProtKB-UniRule"/>
</dbReference>
<dbReference type="GO" id="GO:0048038">
    <property type="term" value="F:quinone binding"/>
    <property type="evidence" value="ECO:0007669"/>
    <property type="project" value="UniProtKB-KW"/>
</dbReference>
<dbReference type="GO" id="GO:0009060">
    <property type="term" value="P:aerobic respiration"/>
    <property type="evidence" value="ECO:0007669"/>
    <property type="project" value="TreeGrafter"/>
</dbReference>
<dbReference type="GO" id="GO:0015990">
    <property type="term" value="P:electron transport coupled proton transport"/>
    <property type="evidence" value="ECO:0007669"/>
    <property type="project" value="TreeGrafter"/>
</dbReference>
<dbReference type="FunFam" id="3.40.50.12280:FF:000002">
    <property type="entry name" value="NADH-quinone oxidoreductase subunit B"/>
    <property type="match status" value="1"/>
</dbReference>
<dbReference type="Gene3D" id="3.40.50.12280">
    <property type="match status" value="1"/>
</dbReference>
<dbReference type="HAMAP" id="MF_01356">
    <property type="entry name" value="NDH1_NuoB"/>
    <property type="match status" value="1"/>
</dbReference>
<dbReference type="InterPro" id="IPR006137">
    <property type="entry name" value="NADH_UbQ_OxRdtase-like_20kDa"/>
</dbReference>
<dbReference type="InterPro" id="IPR006138">
    <property type="entry name" value="NADH_UQ_OxRdtase_20Kd_su"/>
</dbReference>
<dbReference type="NCBIfam" id="TIGR01957">
    <property type="entry name" value="nuoB_fam"/>
    <property type="match status" value="1"/>
</dbReference>
<dbReference type="NCBIfam" id="NF005012">
    <property type="entry name" value="PRK06411.1"/>
    <property type="match status" value="1"/>
</dbReference>
<dbReference type="NCBIfam" id="NF011391">
    <property type="entry name" value="PRK14816.1"/>
    <property type="match status" value="1"/>
</dbReference>
<dbReference type="PANTHER" id="PTHR11995">
    <property type="entry name" value="NADH DEHYDROGENASE"/>
    <property type="match status" value="1"/>
</dbReference>
<dbReference type="PANTHER" id="PTHR11995:SF14">
    <property type="entry name" value="NADH DEHYDROGENASE [UBIQUINONE] IRON-SULFUR PROTEIN 7, MITOCHONDRIAL"/>
    <property type="match status" value="1"/>
</dbReference>
<dbReference type="Pfam" id="PF01058">
    <property type="entry name" value="Oxidored_q6"/>
    <property type="match status" value="1"/>
</dbReference>
<dbReference type="SUPFAM" id="SSF56770">
    <property type="entry name" value="HydA/Nqo6-like"/>
    <property type="match status" value="1"/>
</dbReference>
<dbReference type="PROSITE" id="PS01150">
    <property type="entry name" value="COMPLEX1_20K"/>
    <property type="match status" value="1"/>
</dbReference>